<sequence>MHFEVHGLDRPDAKTIILSSGLGGSGSYWAPQIEALATDFRIVTYDHRGTGRTGGDVPDTGGISAMADDVLEIAARLQLDRFDFMGHALGGLIGLDIALRRPELIGKLILINAWSKADPHSGRCFDIRIELLERSGVEAFVKAQPLFLYPAVWMSENAERMAADERHGVAHFQGKANVLKRIAALRAFDIDDRLSEIRTPTLVVGTRDDLLVPYTRSVRLAEGLSAAELALSDFGAHAVNVVEPEEFNNKVLRFLRARSEVR</sequence>
<name>RUTD_RHIR8</name>
<organism>
    <name type="scientific">Rhizobium rhizogenes (strain K84 / ATCC BAA-868)</name>
    <name type="common">Agrobacterium radiobacter</name>
    <dbReference type="NCBI Taxonomy" id="311403"/>
    <lineage>
        <taxon>Bacteria</taxon>
        <taxon>Pseudomonadati</taxon>
        <taxon>Pseudomonadota</taxon>
        <taxon>Alphaproteobacteria</taxon>
        <taxon>Hyphomicrobiales</taxon>
        <taxon>Rhizobiaceae</taxon>
        <taxon>Rhizobium/Agrobacterium group</taxon>
        <taxon>Rhizobium</taxon>
    </lineage>
</organism>
<protein>
    <recommendedName>
        <fullName evidence="1">Putative carbamate hydrolase RutD</fullName>
        <ecNumber evidence="1">3.5.1.-</ecNumber>
    </recommendedName>
    <alternativeName>
        <fullName evidence="1">Aminohydrolase</fullName>
    </alternativeName>
</protein>
<reference key="1">
    <citation type="journal article" date="2009" name="J. Bacteriol.">
        <title>Genome sequences of three Agrobacterium biovars help elucidate the evolution of multichromosome genomes in bacteria.</title>
        <authorList>
            <person name="Slater S.C."/>
            <person name="Goldman B.S."/>
            <person name="Goodner B."/>
            <person name="Setubal J.C."/>
            <person name="Farrand S.K."/>
            <person name="Nester E.W."/>
            <person name="Burr T.J."/>
            <person name="Banta L."/>
            <person name="Dickerman A.W."/>
            <person name="Paulsen I."/>
            <person name="Otten L."/>
            <person name="Suen G."/>
            <person name="Welch R."/>
            <person name="Almeida N.F."/>
            <person name="Arnold F."/>
            <person name="Burton O.T."/>
            <person name="Du Z."/>
            <person name="Ewing A."/>
            <person name="Godsy E."/>
            <person name="Heisel S."/>
            <person name="Houmiel K.L."/>
            <person name="Jhaveri J."/>
            <person name="Lu J."/>
            <person name="Miller N.M."/>
            <person name="Norton S."/>
            <person name="Chen Q."/>
            <person name="Phoolcharoen W."/>
            <person name="Ohlin V."/>
            <person name="Ondrusek D."/>
            <person name="Pride N."/>
            <person name="Stricklin S.L."/>
            <person name="Sun J."/>
            <person name="Wheeler C."/>
            <person name="Wilson L."/>
            <person name="Zhu H."/>
            <person name="Wood D.W."/>
        </authorList>
    </citation>
    <scope>NUCLEOTIDE SEQUENCE [LARGE SCALE GENOMIC DNA]</scope>
    <source>
        <strain>K84 / ATCC BAA-868</strain>
    </source>
</reference>
<accession>B9JLT6</accession>
<evidence type="ECO:0000255" key="1">
    <source>
        <dbReference type="HAMAP-Rule" id="MF_00832"/>
    </source>
</evidence>
<feature type="chain" id="PRO_0000402924" description="Putative carbamate hydrolase RutD">
    <location>
        <begin position="1"/>
        <end position="262"/>
    </location>
</feature>
<comment type="function">
    <text evidence="1">Involved in pyrimidine catabolism. May facilitate the hydrolysis of carbamate, a reaction that can also occur spontaneously.</text>
</comment>
<comment type="catalytic activity">
    <reaction evidence="1">
        <text>carbamate + 2 H(+) = NH4(+) + CO2</text>
        <dbReference type="Rhea" id="RHEA:15649"/>
        <dbReference type="ChEBI" id="CHEBI:13941"/>
        <dbReference type="ChEBI" id="CHEBI:15378"/>
        <dbReference type="ChEBI" id="CHEBI:16526"/>
        <dbReference type="ChEBI" id="CHEBI:28938"/>
    </reaction>
</comment>
<comment type="similarity">
    <text evidence="1">Belongs to the AB hydrolase superfamily. Hydrolase RutD family.</text>
</comment>
<gene>
    <name evidence="1" type="primary">rutD</name>
    <name type="ordered locus">Arad_7070</name>
</gene>
<keyword id="KW-0378">Hydrolase</keyword>
<dbReference type="EC" id="3.5.1.-" evidence="1"/>
<dbReference type="EMBL" id="CP000629">
    <property type="protein sequence ID" value="ACM28650.1"/>
    <property type="molecule type" value="Genomic_DNA"/>
</dbReference>
<dbReference type="RefSeq" id="WP_012649156.1">
    <property type="nucleotide sequence ID" value="NC_011983.1"/>
</dbReference>
<dbReference type="SMR" id="B9JLT6"/>
<dbReference type="STRING" id="311403.Arad_7070"/>
<dbReference type="ESTHER" id="agrrk-rutd">
    <property type="family name" value="RutD"/>
</dbReference>
<dbReference type="GeneID" id="86850962"/>
<dbReference type="KEGG" id="ara:Arad_7070"/>
<dbReference type="eggNOG" id="COG2267">
    <property type="taxonomic scope" value="Bacteria"/>
</dbReference>
<dbReference type="HOGENOM" id="CLU_020336_50_1_5"/>
<dbReference type="Proteomes" id="UP000001600">
    <property type="component" value="Chromosome 2"/>
</dbReference>
<dbReference type="GO" id="GO:0016811">
    <property type="term" value="F:hydrolase activity, acting on carbon-nitrogen (but not peptide) bonds, in linear amides"/>
    <property type="evidence" value="ECO:0007669"/>
    <property type="project" value="InterPro"/>
</dbReference>
<dbReference type="GO" id="GO:0019740">
    <property type="term" value="P:nitrogen utilization"/>
    <property type="evidence" value="ECO:0007669"/>
    <property type="project" value="UniProtKB-UniRule"/>
</dbReference>
<dbReference type="GO" id="GO:0006212">
    <property type="term" value="P:uracil catabolic process"/>
    <property type="evidence" value="ECO:0007669"/>
    <property type="project" value="UniProtKB-UniRule"/>
</dbReference>
<dbReference type="Gene3D" id="3.40.50.1820">
    <property type="entry name" value="alpha/beta hydrolase"/>
    <property type="match status" value="1"/>
</dbReference>
<dbReference type="HAMAP" id="MF_00832">
    <property type="entry name" value="RutD"/>
    <property type="match status" value="1"/>
</dbReference>
<dbReference type="InterPro" id="IPR050471">
    <property type="entry name" value="AB_hydrolase"/>
</dbReference>
<dbReference type="InterPro" id="IPR000073">
    <property type="entry name" value="AB_hydrolase_1"/>
</dbReference>
<dbReference type="InterPro" id="IPR029058">
    <property type="entry name" value="AB_hydrolase_fold"/>
</dbReference>
<dbReference type="InterPro" id="IPR022742">
    <property type="entry name" value="Hydrolase_4"/>
</dbReference>
<dbReference type="InterPro" id="IPR019913">
    <property type="entry name" value="Pyrimidine_utilisation_RutD"/>
</dbReference>
<dbReference type="NCBIfam" id="TIGR03611">
    <property type="entry name" value="RutD"/>
    <property type="match status" value="1"/>
</dbReference>
<dbReference type="PANTHER" id="PTHR43433:SF10">
    <property type="entry name" value="AB HYDROLASE-1 DOMAIN-CONTAINING PROTEIN"/>
    <property type="match status" value="1"/>
</dbReference>
<dbReference type="PANTHER" id="PTHR43433">
    <property type="entry name" value="HYDROLASE, ALPHA/BETA FOLD FAMILY PROTEIN"/>
    <property type="match status" value="1"/>
</dbReference>
<dbReference type="Pfam" id="PF12146">
    <property type="entry name" value="Hydrolase_4"/>
    <property type="match status" value="1"/>
</dbReference>
<dbReference type="PRINTS" id="PR00111">
    <property type="entry name" value="ABHYDROLASE"/>
</dbReference>
<dbReference type="SUPFAM" id="SSF53474">
    <property type="entry name" value="alpha/beta-Hydrolases"/>
    <property type="match status" value="1"/>
</dbReference>
<proteinExistence type="inferred from homology"/>